<feature type="chain" id="PRO_0000410304" description="Transcription initiation factor IIA subunit 2">
    <location>
        <begin position="1"/>
        <end position="127"/>
    </location>
</feature>
<proteinExistence type="inferred from homology"/>
<organism>
    <name type="scientific">Cryptococcus neoformans var. neoformans serotype D (strain B-3501A)</name>
    <name type="common">Filobasidiella neoformans</name>
    <dbReference type="NCBI Taxonomy" id="283643"/>
    <lineage>
        <taxon>Eukaryota</taxon>
        <taxon>Fungi</taxon>
        <taxon>Dikarya</taxon>
        <taxon>Basidiomycota</taxon>
        <taxon>Agaricomycotina</taxon>
        <taxon>Tremellomycetes</taxon>
        <taxon>Tremellales</taxon>
        <taxon>Cryptococcaceae</taxon>
        <taxon>Cryptococcus</taxon>
        <taxon>Cryptococcus neoformans species complex</taxon>
    </lineage>
</organism>
<sequence>MSAGQTYYEFYRGSRHVHIGTALTDALDELITQGDIPPQLAMRVLQQFDKSLTECLQKGVKNKTTIKGHLSTYRLCDDVWTFVVKDPQFKMEGVGAGSEMVTGSKIKIVACKSGDAADGKKAGGARE</sequence>
<name>T2AG_CRYNB</name>
<accession>P0CR85</accession>
<accession>Q55NX9</accession>
<accession>Q5KEI0</accession>
<comment type="function">
    <text evidence="1">TFIIA is a component of the transcription machinery of RNA polymerase II and plays an important role in transcriptional activation. TFIIA in a complex with tbp mediates transcriptional activity (By similarity).</text>
</comment>
<comment type="subunit">
    <text evidence="1">TFIIA is a heterodimer composed of the large TOA1 and the small TOA2 subunits.</text>
</comment>
<comment type="subcellular location">
    <subcellularLocation>
        <location evidence="1">Nucleus</location>
    </subcellularLocation>
</comment>
<comment type="similarity">
    <text evidence="2">Belongs to the TFIIA subunit 2 family.</text>
</comment>
<dbReference type="EMBL" id="AAEY01000039">
    <property type="protein sequence ID" value="EAL19486.1"/>
    <property type="molecule type" value="Genomic_DNA"/>
</dbReference>
<dbReference type="RefSeq" id="XP_774133.1">
    <property type="nucleotide sequence ID" value="XM_769040.1"/>
</dbReference>
<dbReference type="SMR" id="P0CR85"/>
<dbReference type="GeneID" id="4937469"/>
<dbReference type="KEGG" id="cnb:CNBG4330"/>
<dbReference type="VEuPathDB" id="FungiDB:CNBG4330"/>
<dbReference type="HOGENOM" id="CLU_112964_3_1_1"/>
<dbReference type="OrthoDB" id="2969at5206"/>
<dbReference type="GO" id="GO:0005672">
    <property type="term" value="C:transcription factor TFIIA complex"/>
    <property type="evidence" value="ECO:0007669"/>
    <property type="project" value="EnsemblFungi"/>
</dbReference>
<dbReference type="GO" id="GO:0000979">
    <property type="term" value="F:RNA polymerase II core promoter sequence-specific DNA binding"/>
    <property type="evidence" value="ECO:0007669"/>
    <property type="project" value="EnsemblFungi"/>
</dbReference>
<dbReference type="GO" id="GO:0017025">
    <property type="term" value="F:TBP-class protein binding"/>
    <property type="evidence" value="ECO:0007669"/>
    <property type="project" value="EnsemblFungi"/>
</dbReference>
<dbReference type="GO" id="GO:0060261">
    <property type="term" value="P:positive regulation of transcription initiation by RNA polymerase II"/>
    <property type="evidence" value="ECO:0007669"/>
    <property type="project" value="EnsemblFungi"/>
</dbReference>
<dbReference type="GO" id="GO:0051123">
    <property type="term" value="P:RNA polymerase II preinitiation complex assembly"/>
    <property type="evidence" value="ECO:0007669"/>
    <property type="project" value="EnsemblFungi"/>
</dbReference>
<dbReference type="CDD" id="cd10014">
    <property type="entry name" value="TFIIA_gamma_C"/>
    <property type="match status" value="1"/>
</dbReference>
<dbReference type="CDD" id="cd10145">
    <property type="entry name" value="TFIIA_gamma_N"/>
    <property type="match status" value="1"/>
</dbReference>
<dbReference type="FunFam" id="1.10.287.190:FF:000001">
    <property type="entry name" value="Transcription initiation factor IIA subunit 2"/>
    <property type="match status" value="1"/>
</dbReference>
<dbReference type="FunFam" id="2.30.18.10:FF:000003">
    <property type="entry name" value="Transcription initiation factor IIA subunit 2"/>
    <property type="match status" value="1"/>
</dbReference>
<dbReference type="Gene3D" id="2.30.18.10">
    <property type="entry name" value="Transcription factor IIA (TFIIA), beta-barrel domain"/>
    <property type="match status" value="1"/>
</dbReference>
<dbReference type="Gene3D" id="1.10.287.190">
    <property type="entry name" value="Transcription factor IIA gamma subunit, alpha-helical domain"/>
    <property type="match status" value="1"/>
</dbReference>
<dbReference type="InterPro" id="IPR009083">
    <property type="entry name" value="TFIIA_a-hlx"/>
</dbReference>
<dbReference type="InterPro" id="IPR009088">
    <property type="entry name" value="TFIIA_b-brl"/>
</dbReference>
<dbReference type="InterPro" id="IPR003194">
    <property type="entry name" value="TFIIA_gsu"/>
</dbReference>
<dbReference type="InterPro" id="IPR015871">
    <property type="entry name" value="TFIIA_gsu_C"/>
</dbReference>
<dbReference type="InterPro" id="IPR015872">
    <property type="entry name" value="TFIIA_gsu_N"/>
</dbReference>
<dbReference type="PANTHER" id="PTHR10966">
    <property type="entry name" value="TRANSCRIPTION INITIATION FACTOR IIA SUBUNIT 2"/>
    <property type="match status" value="1"/>
</dbReference>
<dbReference type="Pfam" id="PF02751">
    <property type="entry name" value="TFIIA_gamma_C"/>
    <property type="match status" value="1"/>
</dbReference>
<dbReference type="Pfam" id="PF02268">
    <property type="entry name" value="TFIIA_gamma_N"/>
    <property type="match status" value="1"/>
</dbReference>
<dbReference type="PIRSF" id="PIRSF009415">
    <property type="entry name" value="Hum_TFIIA_gamma"/>
    <property type="match status" value="1"/>
</dbReference>
<dbReference type="SUPFAM" id="SSF47396">
    <property type="entry name" value="Transcription factor IIA (TFIIA), alpha-helical domain"/>
    <property type="match status" value="1"/>
</dbReference>
<dbReference type="SUPFAM" id="SSF50784">
    <property type="entry name" value="Transcription factor IIA (TFIIA), beta-barrel domain"/>
    <property type="match status" value="1"/>
</dbReference>
<gene>
    <name type="primary">TOA2</name>
    <name type="ordered locus">CNBG4330</name>
</gene>
<protein>
    <recommendedName>
        <fullName>Transcription initiation factor IIA subunit 2</fullName>
    </recommendedName>
    <alternativeName>
        <fullName>General transcription factor IIA subunit 2</fullName>
    </alternativeName>
    <alternativeName>
        <fullName>Transcription initiation factor IIA small chain</fullName>
    </alternativeName>
</protein>
<evidence type="ECO:0000250" key="1"/>
<evidence type="ECO:0000305" key="2"/>
<reference key="1">
    <citation type="journal article" date="2005" name="Science">
        <title>The genome of the basidiomycetous yeast and human pathogen Cryptococcus neoformans.</title>
        <authorList>
            <person name="Loftus B.J."/>
            <person name="Fung E."/>
            <person name="Roncaglia P."/>
            <person name="Rowley D."/>
            <person name="Amedeo P."/>
            <person name="Bruno D."/>
            <person name="Vamathevan J."/>
            <person name="Miranda M."/>
            <person name="Anderson I.J."/>
            <person name="Fraser J.A."/>
            <person name="Allen J.E."/>
            <person name="Bosdet I.E."/>
            <person name="Brent M.R."/>
            <person name="Chiu R."/>
            <person name="Doering T.L."/>
            <person name="Donlin M.J."/>
            <person name="D'Souza C.A."/>
            <person name="Fox D.S."/>
            <person name="Grinberg V."/>
            <person name="Fu J."/>
            <person name="Fukushima M."/>
            <person name="Haas B.J."/>
            <person name="Huang J.C."/>
            <person name="Janbon G."/>
            <person name="Jones S.J.M."/>
            <person name="Koo H.L."/>
            <person name="Krzywinski M.I."/>
            <person name="Kwon-Chung K.J."/>
            <person name="Lengeler K.B."/>
            <person name="Maiti R."/>
            <person name="Marra M.A."/>
            <person name="Marra R.E."/>
            <person name="Mathewson C.A."/>
            <person name="Mitchell T.G."/>
            <person name="Pertea M."/>
            <person name="Riggs F.R."/>
            <person name="Salzberg S.L."/>
            <person name="Schein J.E."/>
            <person name="Shvartsbeyn A."/>
            <person name="Shin H."/>
            <person name="Shumway M."/>
            <person name="Specht C.A."/>
            <person name="Suh B.B."/>
            <person name="Tenney A."/>
            <person name="Utterback T.R."/>
            <person name="Wickes B.L."/>
            <person name="Wortman J.R."/>
            <person name="Wye N.H."/>
            <person name="Kronstad J.W."/>
            <person name="Lodge J.K."/>
            <person name="Heitman J."/>
            <person name="Davis R.W."/>
            <person name="Fraser C.M."/>
            <person name="Hyman R.W."/>
        </authorList>
    </citation>
    <scope>NUCLEOTIDE SEQUENCE [LARGE SCALE GENOMIC DNA]</scope>
    <source>
        <strain>B-3501A</strain>
    </source>
</reference>
<keyword id="KW-0539">Nucleus</keyword>
<keyword id="KW-0804">Transcription</keyword>
<keyword id="KW-0805">Transcription regulation</keyword>